<name>VIT_PLABA</name>
<comment type="function">
    <text evidence="2 4">Vacuolar iron transporter involved in the transfer of iron ions from the cytosol to the vacuole for intracellular iron storage (By similarity). Involved in detoxification of excess iron (PubMed:26786069). The transport mechanism is not well defined and the role of protons is not clear (By similarity).</text>
</comment>
<comment type="catalytic activity">
    <reaction evidence="2">
        <text>Fe(2+)(in) = Fe(2+)(out)</text>
        <dbReference type="Rhea" id="RHEA:28486"/>
        <dbReference type="ChEBI" id="CHEBI:29033"/>
    </reaction>
    <physiologicalReaction direction="left-to-right" evidence="6">
        <dbReference type="Rhea" id="RHEA:28487"/>
    </physiologicalReaction>
</comment>
<comment type="subunit">
    <text evidence="2">Monomer.</text>
</comment>
<comment type="subcellular location">
    <subcellularLocation>
        <location evidence="2">Vacuole membrane</location>
        <topology evidence="3">Multi-pass membrane protein</topology>
    </subcellularLocation>
    <subcellularLocation>
        <location evidence="4">Endoplasmic reticulum membrane</location>
        <topology evidence="3">Multi-pass membrane protein</topology>
    </subcellularLocation>
</comment>
<comment type="developmental stage">
    <text evidence="4">Expressed in asexual blood stages, mosquito and liver stages of parasites (at protein level).</text>
</comment>
<comment type="disruption phenotype">
    <text evidence="4">Non-essential during asexual blood stages (PubMed:26786069). Parasites yield lower levels of parasitemia and liver infection (PubMed:26786069). Moderate reduction in size of developing exoerythrocytic parasite forms (PubMed:26786069). Increased labile iron pools in blood stages (PubMed:26786069). Increased sensitivity to iron overload in liver stages (PubMed:26786069). Decreased sensitivity to iron chelating conditions in liver stages (PubMed:26786069). No significant defects during transmission to or development within Anopheles stephensi mosquitoes (PubMed:26786069).</text>
</comment>
<comment type="similarity">
    <text evidence="6">Belongs to the CCC1 family.</text>
</comment>
<accession>A0A509AT60</accession>
<feature type="chain" id="PRO_0000459390" description="Vacuolar iron transporter">
    <location>
        <begin position="1"/>
        <end position="273"/>
    </location>
</feature>
<feature type="topological domain" description="Cytoplasmic" evidence="6">
    <location>
        <begin position="1"/>
        <end position="47"/>
    </location>
</feature>
<feature type="transmembrane region" description="Helical" evidence="3">
    <location>
        <begin position="48"/>
        <end position="68"/>
    </location>
</feature>
<feature type="topological domain" description="Vacuolar" evidence="6">
    <location>
        <begin position="69"/>
        <end position="72"/>
    </location>
</feature>
<feature type="transmembrane region" description="Helical" evidence="3">
    <location>
        <begin position="73"/>
        <end position="93"/>
    </location>
</feature>
<feature type="topological domain" description="Cytoplasmic" evidence="6">
    <location>
        <begin position="94"/>
        <end position="181"/>
    </location>
</feature>
<feature type="transmembrane region" description="Helical" evidence="3">
    <location>
        <begin position="182"/>
        <end position="202"/>
    </location>
</feature>
<feature type="topological domain" description="Vacuolar" evidence="6">
    <location>
        <begin position="203"/>
        <end position="212"/>
    </location>
</feature>
<feature type="transmembrane region" description="Helical" evidence="3">
    <location>
        <begin position="213"/>
        <end position="233"/>
    </location>
</feature>
<feature type="topological domain" description="Cytoplasmic" evidence="6">
    <location>
        <begin position="234"/>
        <end position="246"/>
    </location>
</feature>
<feature type="transmembrane region" description="Helical" evidence="3">
    <location>
        <begin position="247"/>
        <end position="267"/>
    </location>
</feature>
<feature type="topological domain" description="Vacuolar" evidence="6">
    <location>
        <begin position="268"/>
        <end position="273"/>
    </location>
</feature>
<feature type="binding site" evidence="1">
    <location>
        <position position="113"/>
    </location>
    <ligand>
        <name>Fe cation</name>
        <dbReference type="ChEBI" id="CHEBI:24875"/>
        <label>1</label>
    </ligand>
</feature>
<feature type="binding site" evidence="1">
    <location>
        <position position="113"/>
    </location>
    <ligand>
        <name>Fe cation</name>
        <dbReference type="ChEBI" id="CHEBI:24875"/>
        <label>2</label>
    </ligand>
</feature>
<feature type="binding site" evidence="1">
    <location>
        <position position="116"/>
    </location>
    <ligand>
        <name>Fe cation</name>
        <dbReference type="ChEBI" id="CHEBI:24875"/>
        <label>1</label>
    </ligand>
</feature>
<feature type="binding site" evidence="1">
    <location>
        <position position="116"/>
    </location>
    <ligand>
        <name>Fe cation</name>
        <dbReference type="ChEBI" id="CHEBI:24875"/>
        <label>3</label>
    </ligand>
</feature>
<feature type="binding site" evidence="1">
    <location>
        <position position="124"/>
    </location>
    <ligand>
        <name>Fe cation</name>
        <dbReference type="ChEBI" id="CHEBI:24875"/>
        <label>1</label>
    </ligand>
</feature>
<feature type="binding site" evidence="1">
    <location>
        <position position="124"/>
    </location>
    <ligand>
        <name>Fe cation</name>
        <dbReference type="ChEBI" id="CHEBI:24875"/>
        <label>2</label>
    </ligand>
</feature>
<feature type="binding site" evidence="1">
    <location>
        <position position="124"/>
    </location>
    <ligand>
        <name>Fe cation</name>
        <dbReference type="ChEBI" id="CHEBI:24875"/>
        <label>3</label>
    </ligand>
</feature>
<feature type="binding site" evidence="1">
    <location>
        <position position="127"/>
    </location>
    <ligand>
        <name>Fe cation</name>
        <dbReference type="ChEBI" id="CHEBI:24875"/>
        <label>1</label>
    </ligand>
</feature>
<feature type="binding site" evidence="1">
    <location>
        <position position="127"/>
    </location>
    <ligand>
        <name>Fe cation</name>
        <dbReference type="ChEBI" id="CHEBI:24875"/>
        <label>2</label>
    </ligand>
</feature>
<feature type="binding site" evidence="1">
    <location>
        <position position="127"/>
    </location>
    <ligand>
        <name>Fe cation</name>
        <dbReference type="ChEBI" id="CHEBI:24875"/>
        <label>3</label>
    </ligand>
</feature>
<feature type="binding site" evidence="1">
    <location>
        <position position="161"/>
    </location>
    <ligand>
        <name>Fe cation</name>
        <dbReference type="ChEBI" id="CHEBI:24875"/>
        <label>2</label>
    </ligand>
</feature>
<feature type="binding site" evidence="1">
    <location>
        <position position="165"/>
    </location>
    <ligand>
        <name>Fe cation</name>
        <dbReference type="ChEBI" id="CHEBI:24875"/>
        <label>1</label>
    </ligand>
</feature>
<organism evidence="8">
    <name type="scientific">Plasmodium berghei (strain Anka)</name>
    <dbReference type="NCBI Taxonomy" id="5823"/>
    <lineage>
        <taxon>Eukaryota</taxon>
        <taxon>Sar</taxon>
        <taxon>Alveolata</taxon>
        <taxon>Apicomplexa</taxon>
        <taxon>Aconoidasida</taxon>
        <taxon>Haemosporida</taxon>
        <taxon>Plasmodiidae</taxon>
        <taxon>Plasmodium</taxon>
        <taxon>Plasmodium (Vinckeia)</taxon>
    </lineage>
</organism>
<proteinExistence type="evidence at protein level"/>
<evidence type="ECO:0000250" key="1">
    <source>
        <dbReference type="UniProtKB" id="P0DO17"/>
    </source>
</evidence>
<evidence type="ECO:0000250" key="2">
    <source>
        <dbReference type="UniProtKB" id="Q8I5I0"/>
    </source>
</evidence>
<evidence type="ECO:0000255" key="3"/>
<evidence type="ECO:0000269" key="4">
    <source>
    </source>
</evidence>
<evidence type="ECO:0000303" key="5">
    <source>
    </source>
</evidence>
<evidence type="ECO:0000305" key="6"/>
<evidence type="ECO:0000312" key="7">
    <source>
        <dbReference type="EMBL" id="VUC58447.1"/>
    </source>
</evidence>
<evidence type="ECO:0000312" key="8">
    <source>
        <dbReference type="Proteomes" id="UP000074855"/>
    </source>
</evidence>
<dbReference type="EMBL" id="LK023129">
    <property type="protein sequence ID" value="VUC58447.1"/>
    <property type="molecule type" value="Genomic_DNA"/>
</dbReference>
<dbReference type="RefSeq" id="XP_678837.1">
    <property type="nucleotide sequence ID" value="XM_673745.1"/>
</dbReference>
<dbReference type="SMR" id="A0A509AT60"/>
<dbReference type="STRING" id="5823.A0A509AT60"/>
<dbReference type="VEuPathDB" id="PlasmoDB:PBANKA_1438600"/>
<dbReference type="InParanoid" id="A0A509AT60"/>
<dbReference type="OMA" id="SRIGWLR"/>
<dbReference type="Proteomes" id="UP000074855">
    <property type="component" value="Chromosome 14"/>
</dbReference>
<dbReference type="GO" id="GO:0005789">
    <property type="term" value="C:endoplasmic reticulum membrane"/>
    <property type="evidence" value="ECO:0007669"/>
    <property type="project" value="UniProtKB-SubCell"/>
</dbReference>
<dbReference type="GO" id="GO:0005774">
    <property type="term" value="C:vacuolar membrane"/>
    <property type="evidence" value="ECO:0007669"/>
    <property type="project" value="UniProtKB-SubCell"/>
</dbReference>
<dbReference type="GO" id="GO:0005384">
    <property type="term" value="F:manganese ion transmembrane transporter activity"/>
    <property type="evidence" value="ECO:0007669"/>
    <property type="project" value="InterPro"/>
</dbReference>
<dbReference type="GO" id="GO:0046872">
    <property type="term" value="F:metal ion binding"/>
    <property type="evidence" value="ECO:0007669"/>
    <property type="project" value="UniProtKB-KW"/>
</dbReference>
<dbReference type="GO" id="GO:0030026">
    <property type="term" value="P:intracellular manganese ion homeostasis"/>
    <property type="evidence" value="ECO:0007669"/>
    <property type="project" value="InterPro"/>
</dbReference>
<dbReference type="GO" id="GO:0006826">
    <property type="term" value="P:iron ion transport"/>
    <property type="evidence" value="ECO:0007669"/>
    <property type="project" value="UniProtKB-KW"/>
</dbReference>
<dbReference type="CDD" id="cd02434">
    <property type="entry name" value="Nodulin-21_like_3"/>
    <property type="match status" value="1"/>
</dbReference>
<dbReference type="InterPro" id="IPR008217">
    <property type="entry name" value="Ccc1_fam"/>
</dbReference>
<dbReference type="PANTHER" id="PTHR31851">
    <property type="entry name" value="FE(2+)/MN(2+) TRANSPORTER PCL1"/>
    <property type="match status" value="1"/>
</dbReference>
<dbReference type="Pfam" id="PF01988">
    <property type="entry name" value="VIT1"/>
    <property type="match status" value="1"/>
</dbReference>
<protein>
    <recommendedName>
        <fullName evidence="5">Vacuolar iron transporter</fullName>
        <shortName evidence="5">PbVIT</shortName>
    </recommendedName>
</protein>
<reference evidence="8" key="1">
    <citation type="journal article" date="2014" name="BMC Biol.">
        <title>A comprehensive evaluation of rodent malaria parasite genomes and gene expression.</title>
        <authorList>
            <person name="Otto T.D."/>
            <person name="Bohme U."/>
            <person name="Jackson A.P."/>
            <person name="Hunt M."/>
            <person name="Franke-Fayard B."/>
            <person name="Hoeijmakers W.A."/>
            <person name="Religa A.A."/>
            <person name="Robertson L."/>
            <person name="Sanders M."/>
            <person name="Ogun S.A."/>
            <person name="Cunningham D."/>
            <person name="Erhart A."/>
            <person name="Billker O."/>
            <person name="Khan S.M."/>
            <person name="Stunnenberg H.G."/>
            <person name="Langhorne J."/>
            <person name="Holder A.A."/>
            <person name="Waters A.P."/>
            <person name="Newbold C.I."/>
            <person name="Pain A."/>
            <person name="Berriman M."/>
            <person name="Janse C.J."/>
        </authorList>
    </citation>
    <scope>NUCLEOTIDE SEQUENCE [LARGE SCALE GENOMIC DNA]</scope>
    <source>
        <strain evidence="8">ANKA</strain>
    </source>
</reference>
<reference evidence="6" key="2">
    <citation type="journal article" date="2016" name="Nat. Commun.">
        <title>A vacuolar iron-transporter homologue acts as a detoxifier in Plasmodium.</title>
        <authorList>
            <person name="Slavic K."/>
            <person name="Krishna S."/>
            <person name="Lahree A."/>
            <person name="Bouyer G."/>
            <person name="Hanson K.K."/>
            <person name="Vera I."/>
            <person name="Pittman J.K."/>
            <person name="Staines H.M."/>
            <person name="Mota M.M."/>
        </authorList>
    </citation>
    <scope>FUNCTION</scope>
    <scope>SUBCELLULAR LOCATION</scope>
    <scope>DEVELOPMENTAL STAGE</scope>
    <scope>DISRUPTION PHENOTYPE</scope>
</reference>
<sequence length="273" mass="30934">MGKQKIIDARKAYYEGDIEKSKEIHSHYHNLDKHAEHHSLDKDHLKTIIFGSLDGIITIFAIVSGCVGANITPAQVIIIGVGNLFANAISMGFSEYTSSTAQIDFMLAERQREEWEIENCPTEEKQEMIDIYINKYKFDSKDAKNLVEITFRNKHFFLEHMMSEELGLILTNEDKSEAFKKGILMFLSFCFFGMIPLFSYVLYNLFFSAENYTSSFAVVFISTLITLFILGLFKSQFTTQKPIVCALSMVLNGSIAGMLPFLFGVLLKTNSGD</sequence>
<keyword id="KW-0256">Endoplasmic reticulum</keyword>
<keyword id="KW-0406">Ion transport</keyword>
<keyword id="KW-0408">Iron</keyword>
<keyword id="KW-0410">Iron transport</keyword>
<keyword id="KW-0472">Membrane</keyword>
<keyword id="KW-0479">Metal-binding</keyword>
<keyword id="KW-0597">Phosphoprotein</keyword>
<keyword id="KW-1185">Reference proteome</keyword>
<keyword id="KW-0812">Transmembrane</keyword>
<keyword id="KW-1133">Transmembrane helix</keyword>
<keyword id="KW-0813">Transport</keyword>
<keyword id="KW-0926">Vacuole</keyword>
<gene>
    <name evidence="6" type="primary">VIT</name>
    <name evidence="7" type="ORF">PBANKA_1438600</name>
</gene>